<organism>
    <name type="scientific">Shigella flexneri</name>
    <dbReference type="NCBI Taxonomy" id="623"/>
    <lineage>
        <taxon>Bacteria</taxon>
        <taxon>Pseudomonadati</taxon>
        <taxon>Pseudomonadota</taxon>
        <taxon>Gammaproteobacteria</taxon>
        <taxon>Enterobacterales</taxon>
        <taxon>Enterobacteriaceae</taxon>
        <taxon>Shigella</taxon>
    </lineage>
</organism>
<accession>Q83QN1</accession>
<feature type="chain" id="PRO_0000109921" description="Oxygen-dependent coproporphyrinogen-III oxidase">
    <location>
        <begin position="1"/>
        <end position="299"/>
    </location>
</feature>
<feature type="region of interest" description="Important for dimerization" evidence="1">
    <location>
        <begin position="240"/>
        <end position="275"/>
    </location>
</feature>
<feature type="active site" description="Proton donor" evidence="1">
    <location>
        <position position="106"/>
    </location>
</feature>
<feature type="binding site" evidence="1">
    <location>
        <position position="92"/>
    </location>
    <ligand>
        <name>substrate</name>
    </ligand>
</feature>
<feature type="binding site" evidence="1">
    <location>
        <position position="96"/>
    </location>
    <ligand>
        <name>a divalent metal cation</name>
        <dbReference type="ChEBI" id="CHEBI:60240"/>
    </ligand>
</feature>
<feature type="binding site" evidence="1">
    <location>
        <position position="106"/>
    </location>
    <ligand>
        <name>a divalent metal cation</name>
        <dbReference type="ChEBI" id="CHEBI:60240"/>
    </ligand>
</feature>
<feature type="binding site" evidence="1">
    <location>
        <begin position="108"/>
        <end position="110"/>
    </location>
    <ligand>
        <name>substrate</name>
    </ligand>
</feature>
<feature type="binding site" evidence="1">
    <location>
        <position position="145"/>
    </location>
    <ligand>
        <name>a divalent metal cation</name>
        <dbReference type="ChEBI" id="CHEBI:60240"/>
    </ligand>
</feature>
<feature type="binding site" evidence="1">
    <location>
        <position position="175"/>
    </location>
    <ligand>
        <name>a divalent metal cation</name>
        <dbReference type="ChEBI" id="CHEBI:60240"/>
    </ligand>
</feature>
<feature type="binding site" evidence="1">
    <location>
        <begin position="258"/>
        <end position="260"/>
    </location>
    <ligand>
        <name>substrate</name>
    </ligand>
</feature>
<feature type="site" description="Important for dimerization" evidence="1">
    <location>
        <position position="175"/>
    </location>
</feature>
<protein>
    <recommendedName>
        <fullName evidence="1">Oxygen-dependent coproporphyrinogen-III oxidase</fullName>
        <shortName evidence="1">CPO</shortName>
        <shortName evidence="1">Coprogen oxidase</shortName>
        <shortName evidence="1">Coproporphyrinogenase</shortName>
        <ecNumber evidence="1">1.3.3.3</ecNumber>
    </recommendedName>
</protein>
<reference key="1">
    <citation type="journal article" date="2002" name="Nucleic Acids Res.">
        <title>Genome sequence of Shigella flexneri 2a: insights into pathogenicity through comparison with genomes of Escherichia coli K12 and O157.</title>
        <authorList>
            <person name="Jin Q."/>
            <person name="Yuan Z."/>
            <person name="Xu J."/>
            <person name="Wang Y."/>
            <person name="Shen Y."/>
            <person name="Lu W."/>
            <person name="Wang J."/>
            <person name="Liu H."/>
            <person name="Yang J."/>
            <person name="Yang F."/>
            <person name="Zhang X."/>
            <person name="Zhang J."/>
            <person name="Yang G."/>
            <person name="Wu H."/>
            <person name="Qu D."/>
            <person name="Dong J."/>
            <person name="Sun L."/>
            <person name="Xue Y."/>
            <person name="Zhao A."/>
            <person name="Gao Y."/>
            <person name="Zhu J."/>
            <person name="Kan B."/>
            <person name="Ding K."/>
            <person name="Chen S."/>
            <person name="Cheng H."/>
            <person name="Yao Z."/>
            <person name="He B."/>
            <person name="Chen R."/>
            <person name="Ma D."/>
            <person name="Qiang B."/>
            <person name="Wen Y."/>
            <person name="Hou Y."/>
            <person name="Yu J."/>
        </authorList>
    </citation>
    <scope>NUCLEOTIDE SEQUENCE [LARGE SCALE GENOMIC DNA]</scope>
    <source>
        <strain>301 / Serotype 2a</strain>
    </source>
</reference>
<reference key="2">
    <citation type="journal article" date="2003" name="Infect. Immun.">
        <title>Complete genome sequence and comparative genomics of Shigella flexneri serotype 2a strain 2457T.</title>
        <authorList>
            <person name="Wei J."/>
            <person name="Goldberg M.B."/>
            <person name="Burland V."/>
            <person name="Venkatesan M.M."/>
            <person name="Deng W."/>
            <person name="Fournier G."/>
            <person name="Mayhew G.F."/>
            <person name="Plunkett G. III"/>
            <person name="Rose D.J."/>
            <person name="Darling A."/>
            <person name="Mau B."/>
            <person name="Perna N.T."/>
            <person name="Payne S.M."/>
            <person name="Runyen-Janecky L.J."/>
            <person name="Zhou S."/>
            <person name="Schwartz D.C."/>
            <person name="Blattner F.R."/>
        </authorList>
    </citation>
    <scope>NUCLEOTIDE SEQUENCE [LARGE SCALE GENOMIC DNA]</scope>
    <source>
        <strain>ATCC 700930 / 2457T / Serotype 2a</strain>
    </source>
</reference>
<sequence>MKPDAHQVKQFLLNLQDTICQQLTAVDGAEFVEDSWQREAGGGGRSRVLRNGGVFEQAGVNFSHVHGEAMPASATAHRPELAGRSFEAMGVSLVVHPHNPYVPTSHANVRFFIAEKPGAEPVWWFGGGFDLTPFYGFEEDAIHWHRTARDLCQPFGEDVYPRYKKWCDDYFYLKHRNEQRGIGGLFFDDLNTPDFDHCFAFMQAVGKGYTDAYLPIVERRKAMAYGERERNFQLYRRGRYVEFNLVWDRGTLFGLQTGGRTESILMSMPPLVRWEYDYQPKDGSPEAALSEFIKVRDWG</sequence>
<gene>
    <name evidence="1" type="primary">hemF</name>
    <name type="ordered locus">SF2489</name>
    <name type="ordered locus">S2637</name>
</gene>
<proteinExistence type="inferred from homology"/>
<name>HEM6_SHIFL</name>
<comment type="function">
    <text evidence="1">Involved in the heme biosynthesis. Catalyzes the aerobic oxidative decarboxylation of propionate groups of rings A and B of coproporphyrinogen-III to yield the vinyl groups in protoporphyrinogen-IX.</text>
</comment>
<comment type="catalytic activity">
    <reaction evidence="1">
        <text>coproporphyrinogen III + O2 + 2 H(+) = protoporphyrinogen IX + 2 CO2 + 2 H2O</text>
        <dbReference type="Rhea" id="RHEA:18257"/>
        <dbReference type="ChEBI" id="CHEBI:15377"/>
        <dbReference type="ChEBI" id="CHEBI:15378"/>
        <dbReference type="ChEBI" id="CHEBI:15379"/>
        <dbReference type="ChEBI" id="CHEBI:16526"/>
        <dbReference type="ChEBI" id="CHEBI:57307"/>
        <dbReference type="ChEBI" id="CHEBI:57309"/>
        <dbReference type="EC" id="1.3.3.3"/>
    </reaction>
</comment>
<comment type="cofactor">
    <cofactor evidence="1">
        <name>a divalent metal cation</name>
        <dbReference type="ChEBI" id="CHEBI:60240"/>
    </cofactor>
</comment>
<comment type="pathway">
    <text evidence="1">Porphyrin-containing compound metabolism; protoporphyrin-IX biosynthesis; protoporphyrinogen-IX from coproporphyrinogen-III (O2 route): step 1/1.</text>
</comment>
<comment type="subunit">
    <text evidence="1">Homodimer.</text>
</comment>
<comment type="subcellular location">
    <subcellularLocation>
        <location evidence="1">Cytoplasm</location>
    </subcellularLocation>
</comment>
<comment type="similarity">
    <text evidence="1">Belongs to the aerobic coproporphyrinogen-III oxidase family.</text>
</comment>
<comment type="sequence caution" evidence="2">
    <conflict type="frameshift">
        <sequence resource="EMBL" id="AE014073"/>
    </conflict>
</comment>
<evidence type="ECO:0000255" key="1">
    <source>
        <dbReference type="HAMAP-Rule" id="MF_00333"/>
    </source>
</evidence>
<evidence type="ECO:0000305" key="2"/>
<keyword id="KW-0963">Cytoplasm</keyword>
<keyword id="KW-0350">Heme biosynthesis</keyword>
<keyword id="KW-0479">Metal-binding</keyword>
<keyword id="KW-0560">Oxidoreductase</keyword>
<keyword id="KW-0627">Porphyrin biosynthesis</keyword>
<keyword id="KW-1185">Reference proteome</keyword>
<dbReference type="EC" id="1.3.3.3" evidence="1"/>
<dbReference type="EMBL" id="AE005674">
    <property type="protein sequence ID" value="AAN43994.1"/>
    <property type="molecule type" value="Genomic_DNA"/>
</dbReference>
<dbReference type="EMBL" id="AE014073">
    <property type="status" value="NOT_ANNOTATED_CDS"/>
    <property type="molecule type" value="Genomic_DNA"/>
</dbReference>
<dbReference type="RefSeq" id="NP_708287.1">
    <property type="nucleotide sequence ID" value="NC_004337.2"/>
</dbReference>
<dbReference type="RefSeq" id="WP_000801375.1">
    <property type="nucleotide sequence ID" value="NZ_CP123365.1"/>
</dbReference>
<dbReference type="SMR" id="Q83QN1"/>
<dbReference type="STRING" id="198214.SF2489"/>
<dbReference type="PaxDb" id="198214-SF2489"/>
<dbReference type="GeneID" id="1025580"/>
<dbReference type="KEGG" id="sfl:SF2489"/>
<dbReference type="PATRIC" id="fig|198214.7.peg.2974"/>
<dbReference type="HOGENOM" id="CLU_026169_0_1_6"/>
<dbReference type="UniPathway" id="UPA00251">
    <property type="reaction ID" value="UER00322"/>
</dbReference>
<dbReference type="Proteomes" id="UP000001006">
    <property type="component" value="Chromosome"/>
</dbReference>
<dbReference type="Proteomes" id="UP000002673">
    <property type="component" value="Chromosome"/>
</dbReference>
<dbReference type="GO" id="GO:0005737">
    <property type="term" value="C:cytoplasm"/>
    <property type="evidence" value="ECO:0007669"/>
    <property type="project" value="UniProtKB-SubCell"/>
</dbReference>
<dbReference type="GO" id="GO:0004109">
    <property type="term" value="F:coproporphyrinogen oxidase activity"/>
    <property type="evidence" value="ECO:0007669"/>
    <property type="project" value="UniProtKB-UniRule"/>
</dbReference>
<dbReference type="GO" id="GO:0046872">
    <property type="term" value="F:metal ion binding"/>
    <property type="evidence" value="ECO:0007669"/>
    <property type="project" value="UniProtKB-KW"/>
</dbReference>
<dbReference type="GO" id="GO:0042803">
    <property type="term" value="F:protein homodimerization activity"/>
    <property type="evidence" value="ECO:0000250"/>
    <property type="project" value="UniProtKB"/>
</dbReference>
<dbReference type="GO" id="GO:0006782">
    <property type="term" value="P:protoporphyrinogen IX biosynthetic process"/>
    <property type="evidence" value="ECO:0007669"/>
    <property type="project" value="UniProtKB-UniRule"/>
</dbReference>
<dbReference type="FunFam" id="3.40.1500.10:FF:000001">
    <property type="entry name" value="Oxygen-dependent coproporphyrinogen-III oxidase"/>
    <property type="match status" value="1"/>
</dbReference>
<dbReference type="Gene3D" id="3.40.1500.10">
    <property type="entry name" value="Coproporphyrinogen III oxidase, aerobic"/>
    <property type="match status" value="1"/>
</dbReference>
<dbReference type="HAMAP" id="MF_00333">
    <property type="entry name" value="Coprogen_oxidas"/>
    <property type="match status" value="1"/>
</dbReference>
<dbReference type="InterPro" id="IPR001260">
    <property type="entry name" value="Coprogen_oxidase_aer"/>
</dbReference>
<dbReference type="InterPro" id="IPR036406">
    <property type="entry name" value="Coprogen_oxidase_aer_sf"/>
</dbReference>
<dbReference type="InterPro" id="IPR018375">
    <property type="entry name" value="Coprogen_oxidase_CS"/>
</dbReference>
<dbReference type="NCBIfam" id="NF003727">
    <property type="entry name" value="PRK05330.1"/>
    <property type="match status" value="1"/>
</dbReference>
<dbReference type="PANTHER" id="PTHR10755">
    <property type="entry name" value="COPROPORPHYRINOGEN III OXIDASE, MITOCHONDRIAL"/>
    <property type="match status" value="1"/>
</dbReference>
<dbReference type="PANTHER" id="PTHR10755:SF0">
    <property type="entry name" value="OXYGEN-DEPENDENT COPROPORPHYRINOGEN-III OXIDASE, MITOCHONDRIAL"/>
    <property type="match status" value="1"/>
</dbReference>
<dbReference type="Pfam" id="PF01218">
    <property type="entry name" value="Coprogen_oxidas"/>
    <property type="match status" value="1"/>
</dbReference>
<dbReference type="PIRSF" id="PIRSF000166">
    <property type="entry name" value="Coproporphyri_ox"/>
    <property type="match status" value="1"/>
</dbReference>
<dbReference type="PRINTS" id="PR00073">
    <property type="entry name" value="COPRGNOXDASE"/>
</dbReference>
<dbReference type="SUPFAM" id="SSF102886">
    <property type="entry name" value="Coproporphyrinogen III oxidase"/>
    <property type="match status" value="1"/>
</dbReference>
<dbReference type="PROSITE" id="PS01021">
    <property type="entry name" value="COPROGEN_OXIDASE"/>
    <property type="match status" value="1"/>
</dbReference>